<evidence type="ECO:0000255" key="1">
    <source>
        <dbReference type="HAMAP-Rule" id="MF_00724"/>
    </source>
</evidence>
<accession>Q4KG70</accession>
<reference key="1">
    <citation type="journal article" date="2005" name="Nat. Biotechnol.">
        <title>Complete genome sequence of the plant commensal Pseudomonas fluorescens Pf-5.</title>
        <authorList>
            <person name="Paulsen I.T."/>
            <person name="Press C.M."/>
            <person name="Ravel J."/>
            <person name="Kobayashi D.Y."/>
            <person name="Myers G.S.A."/>
            <person name="Mavrodi D.V."/>
            <person name="DeBoy R.T."/>
            <person name="Seshadri R."/>
            <person name="Ren Q."/>
            <person name="Madupu R."/>
            <person name="Dodson R.J."/>
            <person name="Durkin A.S."/>
            <person name="Brinkac L.M."/>
            <person name="Daugherty S.C."/>
            <person name="Sullivan S.A."/>
            <person name="Rosovitz M.J."/>
            <person name="Gwinn M.L."/>
            <person name="Zhou L."/>
            <person name="Schneider D.J."/>
            <person name="Cartinhour S.W."/>
            <person name="Nelson W.C."/>
            <person name="Weidman J."/>
            <person name="Watkins K."/>
            <person name="Tran K."/>
            <person name="Khouri H."/>
            <person name="Pierson E.A."/>
            <person name="Pierson L.S. III"/>
            <person name="Thomashow L.S."/>
            <person name="Loper J.E."/>
        </authorList>
    </citation>
    <scope>NUCLEOTIDE SEQUENCE [LARGE SCALE GENOMIC DNA]</scope>
    <source>
        <strain>ATCC BAA-477 / NRRL B-23932 / Pf-5</strain>
    </source>
</reference>
<gene>
    <name evidence="1" type="primary">fliE</name>
    <name type="ordered locus">PFL_1637</name>
</gene>
<keyword id="KW-0975">Bacterial flagellum</keyword>
<comment type="subcellular location">
    <subcellularLocation>
        <location evidence="1">Bacterial flagellum basal body</location>
    </subcellularLocation>
</comment>
<comment type="similarity">
    <text evidence="1">Belongs to the FliE family.</text>
</comment>
<name>FLIE_PSEF5</name>
<sequence>MSQGVEFNRLMLDMRAMQMDAMSQPKSAAVAEVSGSSFADMLGQAVNKVNDTQQASNQLSSAFEIGKSGVDLTDVMISSQKASVSFQALTQVRNKLVQAYQDIMQMPV</sequence>
<proteinExistence type="inferred from homology"/>
<organism>
    <name type="scientific">Pseudomonas fluorescens (strain ATCC BAA-477 / NRRL B-23932 / Pf-5)</name>
    <dbReference type="NCBI Taxonomy" id="220664"/>
    <lineage>
        <taxon>Bacteria</taxon>
        <taxon>Pseudomonadati</taxon>
        <taxon>Pseudomonadota</taxon>
        <taxon>Gammaproteobacteria</taxon>
        <taxon>Pseudomonadales</taxon>
        <taxon>Pseudomonadaceae</taxon>
        <taxon>Pseudomonas</taxon>
    </lineage>
</organism>
<feature type="chain" id="PRO_1000045867" description="Flagellar hook-basal body complex protein FliE">
    <location>
        <begin position="1"/>
        <end position="108"/>
    </location>
</feature>
<dbReference type="EMBL" id="CP000076">
    <property type="protein sequence ID" value="AAY90934.1"/>
    <property type="molecule type" value="Genomic_DNA"/>
</dbReference>
<dbReference type="RefSeq" id="WP_011059973.1">
    <property type="nucleotide sequence ID" value="NC_004129.6"/>
</dbReference>
<dbReference type="SMR" id="Q4KG70"/>
<dbReference type="STRING" id="220664.PFL_1637"/>
<dbReference type="DNASU" id="3477221"/>
<dbReference type="GeneID" id="57474657"/>
<dbReference type="KEGG" id="pfl:PFL_1637"/>
<dbReference type="PATRIC" id="fig|220664.5.peg.1676"/>
<dbReference type="eggNOG" id="COG1677">
    <property type="taxonomic scope" value="Bacteria"/>
</dbReference>
<dbReference type="HOGENOM" id="CLU_147249_0_0_6"/>
<dbReference type="Proteomes" id="UP000008540">
    <property type="component" value="Chromosome"/>
</dbReference>
<dbReference type="GO" id="GO:0009425">
    <property type="term" value="C:bacterial-type flagellum basal body"/>
    <property type="evidence" value="ECO:0007669"/>
    <property type="project" value="UniProtKB-SubCell"/>
</dbReference>
<dbReference type="GO" id="GO:0003774">
    <property type="term" value="F:cytoskeletal motor activity"/>
    <property type="evidence" value="ECO:0007669"/>
    <property type="project" value="InterPro"/>
</dbReference>
<dbReference type="GO" id="GO:0005198">
    <property type="term" value="F:structural molecule activity"/>
    <property type="evidence" value="ECO:0007669"/>
    <property type="project" value="InterPro"/>
</dbReference>
<dbReference type="GO" id="GO:0071973">
    <property type="term" value="P:bacterial-type flagellum-dependent cell motility"/>
    <property type="evidence" value="ECO:0007669"/>
    <property type="project" value="InterPro"/>
</dbReference>
<dbReference type="HAMAP" id="MF_00724">
    <property type="entry name" value="FliE"/>
    <property type="match status" value="1"/>
</dbReference>
<dbReference type="InterPro" id="IPR001624">
    <property type="entry name" value="FliE"/>
</dbReference>
<dbReference type="NCBIfam" id="TIGR00205">
    <property type="entry name" value="fliE"/>
    <property type="match status" value="1"/>
</dbReference>
<dbReference type="PANTHER" id="PTHR34653">
    <property type="match status" value="1"/>
</dbReference>
<dbReference type="PANTHER" id="PTHR34653:SF1">
    <property type="entry name" value="FLAGELLAR HOOK-BASAL BODY COMPLEX PROTEIN FLIE"/>
    <property type="match status" value="1"/>
</dbReference>
<dbReference type="Pfam" id="PF02049">
    <property type="entry name" value="FliE"/>
    <property type="match status" value="1"/>
</dbReference>
<dbReference type="PRINTS" id="PR01006">
    <property type="entry name" value="FLGHOOKFLIE"/>
</dbReference>
<protein>
    <recommendedName>
        <fullName evidence="1">Flagellar hook-basal body complex protein FliE</fullName>
    </recommendedName>
</protein>